<comment type="function">
    <text evidence="1">Part of the high-affinity ATP-driven potassium transport (or Kdp) system, which catalyzes the hydrolysis of ATP coupled with the electrogenic transport of potassium into the cytoplasm. This subunit acts as a catalytic chaperone that increases the ATP-binding affinity of the ATP-hydrolyzing subunit KdpB by the formation of a transient KdpB/KdpC/ATP ternary complex.</text>
</comment>
<comment type="subunit">
    <text evidence="1">The system is composed of three essential subunits: KdpA, KdpB and KdpC.</text>
</comment>
<comment type="subcellular location">
    <subcellularLocation>
        <location evidence="1">Cell inner membrane</location>
        <topology evidence="1">Single-pass membrane protein</topology>
    </subcellularLocation>
</comment>
<comment type="similarity">
    <text evidence="1">Belongs to the KdpC family.</text>
</comment>
<name>KDPC_SALSV</name>
<proteinExistence type="inferred from homology"/>
<organism>
    <name type="scientific">Salmonella schwarzengrund (strain CVM19633)</name>
    <dbReference type="NCBI Taxonomy" id="439843"/>
    <lineage>
        <taxon>Bacteria</taxon>
        <taxon>Pseudomonadati</taxon>
        <taxon>Pseudomonadota</taxon>
        <taxon>Gammaproteobacteria</taxon>
        <taxon>Enterobacterales</taxon>
        <taxon>Enterobacteriaceae</taxon>
        <taxon>Salmonella</taxon>
    </lineage>
</organism>
<feature type="chain" id="PRO_1000114743" description="Potassium-transporting ATPase KdpC subunit">
    <location>
        <begin position="1"/>
        <end position="194"/>
    </location>
</feature>
<feature type="transmembrane region" description="Helical" evidence="1">
    <location>
        <begin position="12"/>
        <end position="34"/>
    </location>
</feature>
<protein>
    <recommendedName>
        <fullName evidence="1">Potassium-transporting ATPase KdpC subunit</fullName>
    </recommendedName>
    <alternativeName>
        <fullName evidence="1">ATP phosphohydrolase [potassium-transporting] C chain</fullName>
    </alternativeName>
    <alternativeName>
        <fullName evidence="1">Potassium-binding and translocating subunit C</fullName>
    </alternativeName>
    <alternativeName>
        <fullName evidence="1">Potassium-translocating ATPase C chain</fullName>
    </alternativeName>
</protein>
<evidence type="ECO:0000255" key="1">
    <source>
        <dbReference type="HAMAP-Rule" id="MF_00276"/>
    </source>
</evidence>
<reference key="1">
    <citation type="journal article" date="2011" name="J. Bacteriol.">
        <title>Comparative genomics of 28 Salmonella enterica isolates: evidence for CRISPR-mediated adaptive sublineage evolution.</title>
        <authorList>
            <person name="Fricke W.F."/>
            <person name="Mammel M.K."/>
            <person name="McDermott P.F."/>
            <person name="Tartera C."/>
            <person name="White D.G."/>
            <person name="Leclerc J.E."/>
            <person name="Ravel J."/>
            <person name="Cebula T.A."/>
        </authorList>
    </citation>
    <scope>NUCLEOTIDE SEQUENCE [LARGE SCALE GENOMIC DNA]</scope>
    <source>
        <strain>CVM19633</strain>
    </source>
</reference>
<dbReference type="EMBL" id="CP001127">
    <property type="protein sequence ID" value="ACF92719.1"/>
    <property type="molecule type" value="Genomic_DNA"/>
</dbReference>
<dbReference type="RefSeq" id="WP_001531010.1">
    <property type="nucleotide sequence ID" value="NC_011094.1"/>
</dbReference>
<dbReference type="SMR" id="B4TQ21"/>
<dbReference type="KEGG" id="sew:SeSA_A0862"/>
<dbReference type="HOGENOM" id="CLU_077094_2_0_6"/>
<dbReference type="Proteomes" id="UP000001865">
    <property type="component" value="Chromosome"/>
</dbReference>
<dbReference type="GO" id="GO:0005886">
    <property type="term" value="C:plasma membrane"/>
    <property type="evidence" value="ECO:0007669"/>
    <property type="project" value="UniProtKB-SubCell"/>
</dbReference>
<dbReference type="GO" id="GO:0005524">
    <property type="term" value="F:ATP binding"/>
    <property type="evidence" value="ECO:0007669"/>
    <property type="project" value="UniProtKB-UniRule"/>
</dbReference>
<dbReference type="GO" id="GO:0008556">
    <property type="term" value="F:P-type potassium transmembrane transporter activity"/>
    <property type="evidence" value="ECO:0007669"/>
    <property type="project" value="InterPro"/>
</dbReference>
<dbReference type="HAMAP" id="MF_00276">
    <property type="entry name" value="KdpC"/>
    <property type="match status" value="1"/>
</dbReference>
<dbReference type="InterPro" id="IPR003820">
    <property type="entry name" value="KdpC"/>
</dbReference>
<dbReference type="NCBIfam" id="TIGR00681">
    <property type="entry name" value="kdpC"/>
    <property type="match status" value="1"/>
</dbReference>
<dbReference type="NCBIfam" id="NF001454">
    <property type="entry name" value="PRK00315.1"/>
    <property type="match status" value="1"/>
</dbReference>
<dbReference type="PANTHER" id="PTHR30042">
    <property type="entry name" value="POTASSIUM-TRANSPORTING ATPASE C CHAIN"/>
    <property type="match status" value="1"/>
</dbReference>
<dbReference type="PANTHER" id="PTHR30042:SF2">
    <property type="entry name" value="POTASSIUM-TRANSPORTING ATPASE KDPC SUBUNIT"/>
    <property type="match status" value="1"/>
</dbReference>
<dbReference type="Pfam" id="PF02669">
    <property type="entry name" value="KdpC"/>
    <property type="match status" value="1"/>
</dbReference>
<dbReference type="PIRSF" id="PIRSF001296">
    <property type="entry name" value="K_ATPase_KdpC"/>
    <property type="match status" value="1"/>
</dbReference>
<sequence>MIGLRPAFSTMLFLLLLTGGVYPLLTTALGQWWFPWQANGSLIHKDNVIRGSALIGQSFTAAGYFHGRPSATADTPYNPLASGGSNLAASNPELDAQIQARVAALRAANPQASSAVPVELATASASGLDNNLTPGAAAWQIPRVAAARQLPVEQVAQLVAEYTHRPLASFLGQPVVNIVKLNLALDALQGHRAK</sequence>
<keyword id="KW-0067">ATP-binding</keyword>
<keyword id="KW-0997">Cell inner membrane</keyword>
<keyword id="KW-1003">Cell membrane</keyword>
<keyword id="KW-0406">Ion transport</keyword>
<keyword id="KW-0472">Membrane</keyword>
<keyword id="KW-0547">Nucleotide-binding</keyword>
<keyword id="KW-0630">Potassium</keyword>
<keyword id="KW-0633">Potassium transport</keyword>
<keyword id="KW-0812">Transmembrane</keyword>
<keyword id="KW-1133">Transmembrane helix</keyword>
<keyword id="KW-0813">Transport</keyword>
<accession>B4TQ21</accession>
<gene>
    <name evidence="1" type="primary">kdpC</name>
    <name type="ordered locus">SeSA_A0862</name>
</gene>